<keyword id="KW-0002">3D-structure</keyword>
<keyword id="KW-0025">Alternative splicing</keyword>
<keyword id="KW-1017">Isopeptide bond</keyword>
<keyword id="KW-0539">Nucleus</keyword>
<keyword id="KW-0597">Phosphoprotein</keyword>
<keyword id="KW-1267">Proteomics identification</keyword>
<keyword id="KW-1185">Reference proteome</keyword>
<keyword id="KW-0698">rRNA processing</keyword>
<keyword id="KW-0832">Ubl conjugation</keyword>
<sequence length="253" mass="30447">MAAAFRKAAKSRQREHRERSQPGFRKHLGLLEKKKDYKLRADDYRKKQEYLKALRKKALEKNPDEFYYKMTRVKLQDGVHIIKETKEEVTPEQLKLMRTQDVKYIEMKRVAEAKKIERLKSELHLLDFQGKQQNKHVFFFDTKKEVEQFDVATHLQTAPELVDRVFNRPRIETLQKEKVKGVTNQTGLKRIAKERQKQYNCLTQRIEREKKLFVIAQKIQTRKDLMDKTQKVKVKKETVNSPAIYKFQSRRKR</sequence>
<organism>
    <name type="scientific">Homo sapiens</name>
    <name type="common">Human</name>
    <dbReference type="NCBI Taxonomy" id="9606"/>
    <lineage>
        <taxon>Eukaryota</taxon>
        <taxon>Metazoa</taxon>
        <taxon>Chordata</taxon>
        <taxon>Craniata</taxon>
        <taxon>Vertebrata</taxon>
        <taxon>Euteleostomi</taxon>
        <taxon>Mammalia</taxon>
        <taxon>Eutheria</taxon>
        <taxon>Euarchontoglires</taxon>
        <taxon>Primates</taxon>
        <taxon>Haplorrhini</taxon>
        <taxon>Catarrhini</taxon>
        <taxon>Hominidae</taxon>
        <taxon>Homo</taxon>
    </lineage>
</organism>
<accession>Q9Y3A2</accession>
<accession>A8K785</accession>
<accession>B4DJC6</accession>
<accession>D3DPT7</accession>
<accession>Q5VT93</accession>
<accession>Q9BS98</accession>
<accession>Q9NS31</accession>
<protein>
    <recommendedName>
        <fullName>Probable U3 small nucleolar RNA-associated protein 11</fullName>
        <shortName>U3 snoRNA-associated protein 11</shortName>
    </recommendedName>
    <alternativeName>
        <fullName>UTP11-like protein</fullName>
    </alternativeName>
</protein>
<comment type="function">
    <text evidence="2">Part of the small subunit (SSU) processome, first precursor of the small eukaryotic ribosomal subunit. During the assembly of the SSU processome in the nucleolus, many ribosome biogenesis factors, an RNA chaperone and ribosomal proteins associate with the nascent pre-rRNA and work in concert to generate RNA folding, modifications, rearrangements and cleavage as well as targeted degradation of pre-ribosomal RNA by the RNA exosome. Involved in nucleolar processing of pre-18S ribosomal RNA.</text>
</comment>
<comment type="subunit">
    <text evidence="2">Part of the small subunit (SSU) processome, composed of more than 70 proteins and the RNA chaperone small nucleolar RNA (snoRNA) U3.</text>
</comment>
<comment type="interaction">
    <interactant intactId="EBI-2876697">
        <id>Q9Y3A2</id>
    </interactant>
    <interactant intactId="EBI-739624">
        <id>Q8NHQ1</id>
        <label>CEP70</label>
    </interactant>
    <organismsDiffer>false</organismsDiffer>
    <experiments>3</experiments>
</comment>
<comment type="subcellular location">
    <subcellularLocation>
        <location evidence="2">Nucleus</location>
        <location evidence="2">Nucleolus</location>
    </subcellularLocation>
</comment>
<comment type="alternative products">
    <event type="alternative splicing"/>
    <isoform>
        <id>Q9Y3A2-1</id>
        <name>1</name>
        <sequence type="displayed"/>
    </isoform>
    <isoform>
        <id>Q9Y3A2-2</id>
        <name>2</name>
        <sequence type="described" ref="VSP_056872"/>
    </isoform>
</comment>
<comment type="similarity">
    <text evidence="4">Belongs to the UTP11 family.</text>
</comment>
<comment type="sequence caution" evidence="4">
    <conflict type="frameshift">
        <sequence resource="EMBL-CDS" id="AAF75562"/>
    </conflict>
</comment>
<proteinExistence type="evidence at protein level"/>
<evidence type="ECO:0000256" key="1">
    <source>
        <dbReference type="SAM" id="MobiDB-lite"/>
    </source>
</evidence>
<evidence type="ECO:0000269" key="2">
    <source>
    </source>
</evidence>
<evidence type="ECO:0000303" key="3">
    <source>
    </source>
</evidence>
<evidence type="ECO:0000305" key="4"/>
<evidence type="ECO:0000312" key="5">
    <source>
        <dbReference type="HGNC" id="HGNC:24329"/>
    </source>
</evidence>
<evidence type="ECO:0007744" key="6">
    <source>
        <dbReference type="PDB" id="7MQ8"/>
    </source>
</evidence>
<evidence type="ECO:0007744" key="7">
    <source>
        <dbReference type="PDB" id="7MQ9"/>
    </source>
</evidence>
<evidence type="ECO:0007744" key="8">
    <source>
        <dbReference type="PDB" id="7MQA"/>
    </source>
</evidence>
<evidence type="ECO:0007744" key="9">
    <source>
    </source>
</evidence>
<evidence type="ECO:0007744" key="10">
    <source>
    </source>
</evidence>
<evidence type="ECO:0007744" key="11">
    <source>
    </source>
</evidence>
<evidence type="ECO:0007744" key="12">
    <source>
    </source>
</evidence>
<evidence type="ECO:0007744" key="13">
    <source>
    </source>
</evidence>
<feature type="chain" id="PRO_0000211042" description="Probable U3 small nucleolar RNA-associated protein 11">
    <location>
        <begin position="1"/>
        <end position="253"/>
    </location>
</feature>
<feature type="region of interest" description="Disordered" evidence="1">
    <location>
        <begin position="1"/>
        <end position="26"/>
    </location>
</feature>
<feature type="modified residue" description="Phosphothreonine" evidence="11">
    <location>
        <position position="90"/>
    </location>
</feature>
<feature type="modified residue" description="Phosphoserine" evidence="9 10 11">
    <location>
        <position position="241"/>
    </location>
</feature>
<feature type="cross-link" description="Glycyl lysine isopeptide (Lys-Gly) (interchain with G-Cter in SUMO2)" evidence="13">
    <location>
        <position position="74"/>
    </location>
</feature>
<feature type="cross-link" description="Glycyl lysine isopeptide (Lys-Gly) (interchain with G-Cter in SUMO2)" evidence="13">
    <location>
        <position position="83"/>
    </location>
</feature>
<feature type="cross-link" description="Glycyl lysine isopeptide (Lys-Gly) (interchain with G-Cter in SUMO2)" evidence="13">
    <location>
        <position position="86"/>
    </location>
</feature>
<feature type="cross-link" description="Glycyl lysine isopeptide (Lys-Gly) (interchain with G-Cter in SUMO2)" evidence="12 13">
    <location>
        <position position="103"/>
    </location>
</feature>
<feature type="cross-link" description="Glycyl lysine isopeptide (Lys-Gly) (interchain with G-Cter in SUMO2)" evidence="13">
    <location>
        <position position="120"/>
    </location>
</feature>
<feature type="cross-link" description="Glycyl lysine isopeptide (Lys-Gly) (interchain with G-Cter in SUMO2)" evidence="13">
    <location>
        <position position="143"/>
    </location>
</feature>
<feature type="cross-link" description="Glycyl lysine isopeptide (Lys-Gly) (interchain with G-Cter in SUMO2)" evidence="13">
    <location>
        <position position="144"/>
    </location>
</feature>
<feature type="cross-link" description="Glycyl lysine isopeptide (Lys-Gly) (interchain with G-Cter in SUMO2)" evidence="13">
    <location>
        <position position="180"/>
    </location>
</feature>
<feature type="cross-link" description="Glycyl lysine isopeptide (Lys-Gly) (interchain with G-Cter in SUMO2)" evidence="13">
    <location>
        <position position="211"/>
    </location>
</feature>
<feature type="cross-link" description="Glycyl lysine isopeptide (Lys-Gly) (interchain with G-Cter in SUMO2)" evidence="13">
    <location>
        <position position="218"/>
    </location>
</feature>
<feature type="cross-link" description="Glycyl lysine isopeptide (Lys-Gly) (interchain with G-Cter in SUMO2)" evidence="13">
    <location>
        <position position="235"/>
    </location>
</feature>
<feature type="cross-link" description="Glycyl lysine isopeptide (Lys-Gly) (interchain with G-Cter in SUMO2)" evidence="13">
    <location>
        <position position="236"/>
    </location>
</feature>
<feature type="cross-link" description="Glycyl lysine isopeptide (Lys-Gly) (interchain with G-Cter in SUMO2)" evidence="13">
    <location>
        <position position="246"/>
    </location>
</feature>
<feature type="splice variant" id="VSP_056872" description="In isoform 2." evidence="3">
    <original>VEQFDVATHLQTAPELVDRVFNRPRIETLQKEKVKGVTNQTGLKRIAKERQKQYNCLTQRIEREKKLFVIAQKIQTRKDLMDKTQKVKVKKETVNSPAIYKFQSRRKR</original>
    <variation>ANS</variation>
    <location>
        <begin position="146"/>
        <end position="253"/>
    </location>
</feature>
<feature type="sequence conflict" description="In Ref. 1; AAD34089." evidence="4" ref="1">
    <original>Q</original>
    <variation>E</variation>
    <location>
        <position position="21"/>
    </location>
</feature>
<feature type="sequence conflict" description="In Ref. 2; AAF75562." evidence="4" ref="2">
    <original>S</original>
    <variation>F</variation>
    <location>
        <position position="241"/>
    </location>
</feature>
<name>UTP11_HUMAN</name>
<gene>
    <name evidence="5" type="primary">UTP11</name>
    <name evidence="5" type="synonym">UTP11L</name>
    <name type="ORF">CGI-94</name>
    <name type="ORF">HDCMB12P</name>
</gene>
<reference key="1">
    <citation type="journal article" date="2000" name="Genome Res.">
        <title>Identification of novel human genes evolutionarily conserved in Caenorhabditis elegans by comparative proteomics.</title>
        <authorList>
            <person name="Lai C.-H."/>
            <person name="Chou C.-Y."/>
            <person name="Ch'ang L.-Y."/>
            <person name="Liu C.-S."/>
            <person name="Lin W.-C."/>
        </authorList>
    </citation>
    <scope>NUCLEOTIDE SEQUENCE [LARGE SCALE MRNA] (ISOFORM 1)</scope>
</reference>
<reference key="2">
    <citation type="submission" date="1998-05" db="EMBL/GenBank/DDBJ databases">
        <title>Novel gene identified from dendritic cells.</title>
        <authorList>
            <person name="Zhao Z."/>
            <person name="Huang X."/>
            <person name="Li N."/>
            <person name="Zhu X."/>
            <person name="Cao X."/>
        </authorList>
    </citation>
    <scope>NUCLEOTIDE SEQUENCE [LARGE SCALE MRNA] (ISOFORM 1)</scope>
</reference>
<reference key="3">
    <citation type="journal article" date="2004" name="Nat. Genet.">
        <title>Complete sequencing and characterization of 21,243 full-length human cDNAs.</title>
        <authorList>
            <person name="Ota T."/>
            <person name="Suzuki Y."/>
            <person name="Nishikawa T."/>
            <person name="Otsuki T."/>
            <person name="Sugiyama T."/>
            <person name="Irie R."/>
            <person name="Wakamatsu A."/>
            <person name="Hayashi K."/>
            <person name="Sato H."/>
            <person name="Nagai K."/>
            <person name="Kimura K."/>
            <person name="Makita H."/>
            <person name="Sekine M."/>
            <person name="Obayashi M."/>
            <person name="Nishi T."/>
            <person name="Shibahara T."/>
            <person name="Tanaka T."/>
            <person name="Ishii S."/>
            <person name="Yamamoto J."/>
            <person name="Saito K."/>
            <person name="Kawai Y."/>
            <person name="Isono Y."/>
            <person name="Nakamura Y."/>
            <person name="Nagahari K."/>
            <person name="Murakami K."/>
            <person name="Yasuda T."/>
            <person name="Iwayanagi T."/>
            <person name="Wagatsuma M."/>
            <person name="Shiratori A."/>
            <person name="Sudo H."/>
            <person name="Hosoiri T."/>
            <person name="Kaku Y."/>
            <person name="Kodaira H."/>
            <person name="Kondo H."/>
            <person name="Sugawara M."/>
            <person name="Takahashi M."/>
            <person name="Kanda K."/>
            <person name="Yokoi T."/>
            <person name="Furuya T."/>
            <person name="Kikkawa E."/>
            <person name="Omura Y."/>
            <person name="Abe K."/>
            <person name="Kamihara K."/>
            <person name="Katsuta N."/>
            <person name="Sato K."/>
            <person name="Tanikawa M."/>
            <person name="Yamazaki M."/>
            <person name="Ninomiya K."/>
            <person name="Ishibashi T."/>
            <person name="Yamashita H."/>
            <person name="Murakawa K."/>
            <person name="Fujimori K."/>
            <person name="Tanai H."/>
            <person name="Kimata M."/>
            <person name="Watanabe M."/>
            <person name="Hiraoka S."/>
            <person name="Chiba Y."/>
            <person name="Ishida S."/>
            <person name="Ono Y."/>
            <person name="Takiguchi S."/>
            <person name="Watanabe S."/>
            <person name="Yosida M."/>
            <person name="Hotuta T."/>
            <person name="Kusano J."/>
            <person name="Kanehori K."/>
            <person name="Takahashi-Fujii A."/>
            <person name="Hara H."/>
            <person name="Tanase T.-O."/>
            <person name="Nomura Y."/>
            <person name="Togiya S."/>
            <person name="Komai F."/>
            <person name="Hara R."/>
            <person name="Takeuchi K."/>
            <person name="Arita M."/>
            <person name="Imose N."/>
            <person name="Musashino K."/>
            <person name="Yuuki H."/>
            <person name="Oshima A."/>
            <person name="Sasaki N."/>
            <person name="Aotsuka S."/>
            <person name="Yoshikawa Y."/>
            <person name="Matsunawa H."/>
            <person name="Ichihara T."/>
            <person name="Shiohata N."/>
            <person name="Sano S."/>
            <person name="Moriya S."/>
            <person name="Momiyama H."/>
            <person name="Satoh N."/>
            <person name="Takami S."/>
            <person name="Terashima Y."/>
            <person name="Suzuki O."/>
            <person name="Nakagawa S."/>
            <person name="Senoh A."/>
            <person name="Mizoguchi H."/>
            <person name="Goto Y."/>
            <person name="Shimizu F."/>
            <person name="Wakebe H."/>
            <person name="Hishigaki H."/>
            <person name="Watanabe T."/>
            <person name="Sugiyama A."/>
            <person name="Takemoto M."/>
            <person name="Kawakami B."/>
            <person name="Yamazaki M."/>
            <person name="Watanabe K."/>
            <person name="Kumagai A."/>
            <person name="Itakura S."/>
            <person name="Fukuzumi Y."/>
            <person name="Fujimori Y."/>
            <person name="Komiyama M."/>
            <person name="Tashiro H."/>
            <person name="Tanigami A."/>
            <person name="Fujiwara T."/>
            <person name="Ono T."/>
            <person name="Yamada K."/>
            <person name="Fujii Y."/>
            <person name="Ozaki K."/>
            <person name="Hirao M."/>
            <person name="Ohmori Y."/>
            <person name="Kawabata A."/>
            <person name="Hikiji T."/>
            <person name="Kobatake N."/>
            <person name="Inagaki H."/>
            <person name="Ikema Y."/>
            <person name="Okamoto S."/>
            <person name="Okitani R."/>
            <person name="Kawakami T."/>
            <person name="Noguchi S."/>
            <person name="Itoh T."/>
            <person name="Shigeta K."/>
            <person name="Senba T."/>
            <person name="Matsumura K."/>
            <person name="Nakajima Y."/>
            <person name="Mizuno T."/>
            <person name="Morinaga M."/>
            <person name="Sasaki M."/>
            <person name="Togashi T."/>
            <person name="Oyama M."/>
            <person name="Hata H."/>
            <person name="Watanabe M."/>
            <person name="Komatsu T."/>
            <person name="Mizushima-Sugano J."/>
            <person name="Satoh T."/>
            <person name="Shirai Y."/>
            <person name="Takahashi Y."/>
            <person name="Nakagawa K."/>
            <person name="Okumura K."/>
            <person name="Nagase T."/>
            <person name="Nomura N."/>
            <person name="Kikuchi H."/>
            <person name="Masuho Y."/>
            <person name="Yamashita R."/>
            <person name="Nakai K."/>
            <person name="Yada T."/>
            <person name="Nakamura Y."/>
            <person name="Ohara O."/>
            <person name="Isogai T."/>
            <person name="Sugano S."/>
        </authorList>
    </citation>
    <scope>NUCLEOTIDE SEQUENCE [LARGE SCALE MRNA] (ISOFORMS 1 AND 2)</scope>
    <source>
        <tissue>Skeletal muscle</tissue>
        <tissue>Subthalamic nucleus</tissue>
    </source>
</reference>
<reference key="4">
    <citation type="journal article" date="2006" name="Nature">
        <title>The DNA sequence and biological annotation of human chromosome 1.</title>
        <authorList>
            <person name="Gregory S.G."/>
            <person name="Barlow K.F."/>
            <person name="McLay K.E."/>
            <person name="Kaul R."/>
            <person name="Swarbreck D."/>
            <person name="Dunham A."/>
            <person name="Scott C.E."/>
            <person name="Howe K.L."/>
            <person name="Woodfine K."/>
            <person name="Spencer C.C.A."/>
            <person name="Jones M.C."/>
            <person name="Gillson C."/>
            <person name="Searle S."/>
            <person name="Zhou Y."/>
            <person name="Kokocinski F."/>
            <person name="McDonald L."/>
            <person name="Evans R."/>
            <person name="Phillips K."/>
            <person name="Atkinson A."/>
            <person name="Cooper R."/>
            <person name="Jones C."/>
            <person name="Hall R.E."/>
            <person name="Andrews T.D."/>
            <person name="Lloyd C."/>
            <person name="Ainscough R."/>
            <person name="Almeida J.P."/>
            <person name="Ambrose K.D."/>
            <person name="Anderson F."/>
            <person name="Andrew R.W."/>
            <person name="Ashwell R.I.S."/>
            <person name="Aubin K."/>
            <person name="Babbage A.K."/>
            <person name="Bagguley C.L."/>
            <person name="Bailey J."/>
            <person name="Beasley H."/>
            <person name="Bethel G."/>
            <person name="Bird C.P."/>
            <person name="Bray-Allen S."/>
            <person name="Brown J.Y."/>
            <person name="Brown A.J."/>
            <person name="Buckley D."/>
            <person name="Burton J."/>
            <person name="Bye J."/>
            <person name="Carder C."/>
            <person name="Chapman J.C."/>
            <person name="Clark S.Y."/>
            <person name="Clarke G."/>
            <person name="Clee C."/>
            <person name="Cobley V."/>
            <person name="Collier R.E."/>
            <person name="Corby N."/>
            <person name="Coville G.J."/>
            <person name="Davies J."/>
            <person name="Deadman R."/>
            <person name="Dunn M."/>
            <person name="Earthrowl M."/>
            <person name="Ellington A.G."/>
            <person name="Errington H."/>
            <person name="Frankish A."/>
            <person name="Frankland J."/>
            <person name="French L."/>
            <person name="Garner P."/>
            <person name="Garnett J."/>
            <person name="Gay L."/>
            <person name="Ghori M.R.J."/>
            <person name="Gibson R."/>
            <person name="Gilby L.M."/>
            <person name="Gillett W."/>
            <person name="Glithero R.J."/>
            <person name="Grafham D.V."/>
            <person name="Griffiths C."/>
            <person name="Griffiths-Jones S."/>
            <person name="Grocock R."/>
            <person name="Hammond S."/>
            <person name="Harrison E.S.I."/>
            <person name="Hart E."/>
            <person name="Haugen E."/>
            <person name="Heath P.D."/>
            <person name="Holmes S."/>
            <person name="Holt K."/>
            <person name="Howden P.J."/>
            <person name="Hunt A.R."/>
            <person name="Hunt S.E."/>
            <person name="Hunter G."/>
            <person name="Isherwood J."/>
            <person name="James R."/>
            <person name="Johnson C."/>
            <person name="Johnson D."/>
            <person name="Joy A."/>
            <person name="Kay M."/>
            <person name="Kershaw J.K."/>
            <person name="Kibukawa M."/>
            <person name="Kimberley A.M."/>
            <person name="King A."/>
            <person name="Knights A.J."/>
            <person name="Lad H."/>
            <person name="Laird G."/>
            <person name="Lawlor S."/>
            <person name="Leongamornlert D.A."/>
            <person name="Lloyd D.M."/>
            <person name="Loveland J."/>
            <person name="Lovell J."/>
            <person name="Lush M.J."/>
            <person name="Lyne R."/>
            <person name="Martin S."/>
            <person name="Mashreghi-Mohammadi M."/>
            <person name="Matthews L."/>
            <person name="Matthews N.S.W."/>
            <person name="McLaren S."/>
            <person name="Milne S."/>
            <person name="Mistry S."/>
            <person name="Moore M.J.F."/>
            <person name="Nickerson T."/>
            <person name="O'Dell C.N."/>
            <person name="Oliver K."/>
            <person name="Palmeiri A."/>
            <person name="Palmer S.A."/>
            <person name="Parker A."/>
            <person name="Patel D."/>
            <person name="Pearce A.V."/>
            <person name="Peck A.I."/>
            <person name="Pelan S."/>
            <person name="Phelps K."/>
            <person name="Phillimore B.J."/>
            <person name="Plumb R."/>
            <person name="Rajan J."/>
            <person name="Raymond C."/>
            <person name="Rouse G."/>
            <person name="Saenphimmachak C."/>
            <person name="Sehra H.K."/>
            <person name="Sheridan E."/>
            <person name="Shownkeen R."/>
            <person name="Sims S."/>
            <person name="Skuce C.D."/>
            <person name="Smith M."/>
            <person name="Steward C."/>
            <person name="Subramanian S."/>
            <person name="Sycamore N."/>
            <person name="Tracey A."/>
            <person name="Tromans A."/>
            <person name="Van Helmond Z."/>
            <person name="Wall M."/>
            <person name="Wallis J.M."/>
            <person name="White S."/>
            <person name="Whitehead S.L."/>
            <person name="Wilkinson J.E."/>
            <person name="Willey D.L."/>
            <person name="Williams H."/>
            <person name="Wilming L."/>
            <person name="Wray P.W."/>
            <person name="Wu Z."/>
            <person name="Coulson A."/>
            <person name="Vaudin M."/>
            <person name="Sulston J.E."/>
            <person name="Durbin R.M."/>
            <person name="Hubbard T."/>
            <person name="Wooster R."/>
            <person name="Dunham I."/>
            <person name="Carter N.P."/>
            <person name="McVean G."/>
            <person name="Ross M.T."/>
            <person name="Harrow J."/>
            <person name="Olson M.V."/>
            <person name="Beck S."/>
            <person name="Rogers J."/>
            <person name="Bentley D.R."/>
        </authorList>
    </citation>
    <scope>NUCLEOTIDE SEQUENCE [LARGE SCALE GENOMIC DNA]</scope>
</reference>
<reference key="5">
    <citation type="submission" date="2005-09" db="EMBL/GenBank/DDBJ databases">
        <authorList>
            <person name="Mural R.J."/>
            <person name="Istrail S."/>
            <person name="Sutton G.G."/>
            <person name="Florea L."/>
            <person name="Halpern A.L."/>
            <person name="Mobarry C.M."/>
            <person name="Lippert R."/>
            <person name="Walenz B."/>
            <person name="Shatkay H."/>
            <person name="Dew I."/>
            <person name="Miller J.R."/>
            <person name="Flanigan M.J."/>
            <person name="Edwards N.J."/>
            <person name="Bolanos R."/>
            <person name="Fasulo D."/>
            <person name="Halldorsson B.V."/>
            <person name="Hannenhalli S."/>
            <person name="Turner R."/>
            <person name="Yooseph S."/>
            <person name="Lu F."/>
            <person name="Nusskern D.R."/>
            <person name="Shue B.C."/>
            <person name="Zheng X.H."/>
            <person name="Zhong F."/>
            <person name="Delcher A.L."/>
            <person name="Huson D.H."/>
            <person name="Kravitz S.A."/>
            <person name="Mouchard L."/>
            <person name="Reinert K."/>
            <person name="Remington K.A."/>
            <person name="Clark A.G."/>
            <person name="Waterman M.S."/>
            <person name="Eichler E.E."/>
            <person name="Adams M.D."/>
            <person name="Hunkapiller M.W."/>
            <person name="Myers E.W."/>
            <person name="Venter J.C."/>
        </authorList>
    </citation>
    <scope>NUCLEOTIDE SEQUENCE [LARGE SCALE GENOMIC DNA]</scope>
</reference>
<reference key="6">
    <citation type="journal article" date="2004" name="Genome Res.">
        <title>The status, quality, and expansion of the NIH full-length cDNA project: the Mammalian Gene Collection (MGC).</title>
        <authorList>
            <consortium name="The MGC Project Team"/>
        </authorList>
    </citation>
    <scope>NUCLEOTIDE SEQUENCE [LARGE SCALE MRNA] (ISOFORM 1)</scope>
    <source>
        <tissue>Urinary bladder</tissue>
    </source>
</reference>
<reference key="7">
    <citation type="journal article" date="2009" name="Anal. Chem.">
        <title>Lys-N and trypsin cover complementary parts of the phosphoproteome in a refined SCX-based approach.</title>
        <authorList>
            <person name="Gauci S."/>
            <person name="Helbig A.O."/>
            <person name="Slijper M."/>
            <person name="Krijgsveld J."/>
            <person name="Heck A.J."/>
            <person name="Mohammed S."/>
        </authorList>
    </citation>
    <scope>IDENTIFICATION BY MASS SPECTROMETRY [LARGE SCALE ANALYSIS]</scope>
</reference>
<reference key="8">
    <citation type="journal article" date="2010" name="Sci. Signal.">
        <title>Quantitative phosphoproteomics reveals widespread full phosphorylation site occupancy during mitosis.</title>
        <authorList>
            <person name="Olsen J.V."/>
            <person name="Vermeulen M."/>
            <person name="Santamaria A."/>
            <person name="Kumar C."/>
            <person name="Miller M.L."/>
            <person name="Jensen L.J."/>
            <person name="Gnad F."/>
            <person name="Cox J."/>
            <person name="Jensen T.S."/>
            <person name="Nigg E.A."/>
            <person name="Brunak S."/>
            <person name="Mann M."/>
        </authorList>
    </citation>
    <scope>PHOSPHORYLATION [LARGE SCALE ANALYSIS] AT SER-241</scope>
    <scope>IDENTIFICATION BY MASS SPECTROMETRY [LARGE SCALE ANALYSIS]</scope>
    <source>
        <tissue>Cervix carcinoma</tissue>
    </source>
</reference>
<reference key="9">
    <citation type="journal article" date="2011" name="Sci. Signal.">
        <title>System-wide temporal characterization of the proteome and phosphoproteome of human embryonic stem cell differentiation.</title>
        <authorList>
            <person name="Rigbolt K.T."/>
            <person name="Prokhorova T.A."/>
            <person name="Akimov V."/>
            <person name="Henningsen J."/>
            <person name="Johansen P.T."/>
            <person name="Kratchmarova I."/>
            <person name="Kassem M."/>
            <person name="Mann M."/>
            <person name="Olsen J.V."/>
            <person name="Blagoev B."/>
        </authorList>
    </citation>
    <scope>PHOSPHORYLATION [LARGE SCALE ANALYSIS] AT SER-241</scope>
    <scope>IDENTIFICATION BY MASS SPECTROMETRY [LARGE SCALE ANALYSIS]</scope>
</reference>
<reference key="10">
    <citation type="journal article" date="2013" name="J. Proteome Res.">
        <title>Toward a comprehensive characterization of a human cancer cell phosphoproteome.</title>
        <authorList>
            <person name="Zhou H."/>
            <person name="Di Palma S."/>
            <person name="Preisinger C."/>
            <person name="Peng M."/>
            <person name="Polat A.N."/>
            <person name="Heck A.J."/>
            <person name="Mohammed S."/>
        </authorList>
    </citation>
    <scope>PHOSPHORYLATION [LARGE SCALE ANALYSIS] AT THR-90 AND SER-241</scope>
    <scope>IDENTIFICATION BY MASS SPECTROMETRY [LARGE SCALE ANALYSIS]</scope>
    <source>
        <tissue>Cervix carcinoma</tissue>
        <tissue>Erythroleukemia</tissue>
    </source>
</reference>
<reference key="11">
    <citation type="journal article" date="2014" name="Nat. Struct. Mol. Biol.">
        <title>Uncovering global SUMOylation signaling networks in a site-specific manner.</title>
        <authorList>
            <person name="Hendriks I.A."/>
            <person name="D'Souza R.C."/>
            <person name="Yang B."/>
            <person name="Verlaan-de Vries M."/>
            <person name="Mann M."/>
            <person name="Vertegaal A.C."/>
        </authorList>
    </citation>
    <scope>SUMOYLATION [LARGE SCALE ANALYSIS] AT LYS-103</scope>
    <scope>IDENTIFICATION BY MASS SPECTROMETRY [LARGE SCALE ANALYSIS]</scope>
</reference>
<reference key="12">
    <citation type="journal article" date="2017" name="Nat. Struct. Mol. Biol.">
        <title>Site-specific mapping of the human SUMO proteome reveals co-modification with phosphorylation.</title>
        <authorList>
            <person name="Hendriks I.A."/>
            <person name="Lyon D."/>
            <person name="Young C."/>
            <person name="Jensen L.J."/>
            <person name="Vertegaal A.C."/>
            <person name="Nielsen M.L."/>
        </authorList>
    </citation>
    <scope>SUMOYLATION [LARGE SCALE ANALYSIS] AT LYS-74; LYS-83; LYS-86; LYS-103; LYS-120; LYS-143; LYS-144; LYS-180; LYS-211; LYS-218; LYS-235; LYS-236 AND LYS-246</scope>
    <scope>IDENTIFICATION BY MASS SPECTROMETRY [LARGE SCALE ANALYSIS]</scope>
</reference>
<reference evidence="6 7 8" key="13">
    <citation type="journal article" date="2021" name="Science">
        <title>Nucleolar maturation of the human small subunit processome.</title>
        <authorList>
            <person name="Singh S."/>
            <person name="Vanden Broeck A."/>
            <person name="Miller L."/>
            <person name="Chaker-Margot M."/>
            <person name="Klinge S."/>
        </authorList>
    </citation>
    <scope>STRUCTURE BY ELECTRON MICROSCOPY (2.70 ANGSTROMS)</scope>
</reference>
<dbReference type="EMBL" id="AF151852">
    <property type="protein sequence ID" value="AAD34089.1"/>
    <property type="molecule type" value="mRNA"/>
</dbReference>
<dbReference type="EMBL" id="AF067802">
    <property type="protein sequence ID" value="AAF75562.1"/>
    <property type="status" value="ALT_FRAME"/>
    <property type="molecule type" value="mRNA"/>
</dbReference>
<dbReference type="EMBL" id="AK291900">
    <property type="protein sequence ID" value="BAF84589.1"/>
    <property type="molecule type" value="mRNA"/>
</dbReference>
<dbReference type="EMBL" id="AK296018">
    <property type="protein sequence ID" value="BAG58788.1"/>
    <property type="molecule type" value="mRNA"/>
</dbReference>
<dbReference type="EMBL" id="AL603790">
    <property type="status" value="NOT_ANNOTATED_CDS"/>
    <property type="molecule type" value="Genomic_DNA"/>
</dbReference>
<dbReference type="EMBL" id="CH471059">
    <property type="protein sequence ID" value="EAX07299.1"/>
    <property type="molecule type" value="Genomic_DNA"/>
</dbReference>
<dbReference type="EMBL" id="CH471059">
    <property type="protein sequence ID" value="EAX07300.1"/>
    <property type="molecule type" value="Genomic_DNA"/>
</dbReference>
<dbReference type="EMBL" id="BC005182">
    <property type="protein sequence ID" value="AAH05182.1"/>
    <property type="molecule type" value="mRNA"/>
</dbReference>
<dbReference type="CCDS" id="CCDS429.1">
    <molecule id="Q9Y3A2-1"/>
</dbReference>
<dbReference type="RefSeq" id="NP_057121.2">
    <molecule id="Q9Y3A2-1"/>
    <property type="nucleotide sequence ID" value="NM_016037.4"/>
</dbReference>
<dbReference type="PDB" id="7MQ8">
    <property type="method" value="EM"/>
    <property type="resolution" value="3.60 A"/>
    <property type="chains" value="SY=1-253"/>
</dbReference>
<dbReference type="PDB" id="7MQ9">
    <property type="method" value="EM"/>
    <property type="resolution" value="3.87 A"/>
    <property type="chains" value="SY=1-253"/>
</dbReference>
<dbReference type="PDB" id="7MQA">
    <property type="method" value="EM"/>
    <property type="resolution" value="2.70 A"/>
    <property type="chains" value="SY=1-253"/>
</dbReference>
<dbReference type="PDBsum" id="7MQ8"/>
<dbReference type="PDBsum" id="7MQ9"/>
<dbReference type="PDBsum" id="7MQA"/>
<dbReference type="EMDB" id="EMD-23936"/>
<dbReference type="EMDB" id="EMD-23937"/>
<dbReference type="EMDB" id="EMD-23938"/>
<dbReference type="SMR" id="Q9Y3A2"/>
<dbReference type="BioGRID" id="119306">
    <property type="interactions" value="94"/>
</dbReference>
<dbReference type="ComplexPortal" id="CPX-2511">
    <property type="entry name" value="Small ribosomal subunit processome"/>
</dbReference>
<dbReference type="FunCoup" id="Q9Y3A2">
    <property type="interactions" value="1927"/>
</dbReference>
<dbReference type="IntAct" id="Q9Y3A2">
    <property type="interactions" value="74"/>
</dbReference>
<dbReference type="MINT" id="Q9Y3A2"/>
<dbReference type="STRING" id="9606.ENSP00000362105"/>
<dbReference type="iPTMnet" id="Q9Y3A2"/>
<dbReference type="PhosphoSitePlus" id="Q9Y3A2"/>
<dbReference type="BioMuta" id="UTP11"/>
<dbReference type="DMDM" id="29611911"/>
<dbReference type="jPOST" id="Q9Y3A2"/>
<dbReference type="MassIVE" id="Q9Y3A2"/>
<dbReference type="PaxDb" id="9606-ENSP00000362105"/>
<dbReference type="PeptideAtlas" id="Q9Y3A2"/>
<dbReference type="ProteomicsDB" id="4367"/>
<dbReference type="ProteomicsDB" id="85992">
    <molecule id="Q9Y3A2-1"/>
</dbReference>
<dbReference type="Pumba" id="Q9Y3A2"/>
<dbReference type="Antibodypedia" id="31826">
    <property type="antibodies" value="133 antibodies from 19 providers"/>
</dbReference>
<dbReference type="DNASU" id="51118"/>
<dbReference type="Ensembl" id="ENST00000373014.5">
    <molecule id="Q9Y3A2-1"/>
    <property type="protein sequence ID" value="ENSP00000362105.4"/>
    <property type="gene ID" value="ENSG00000183520.12"/>
</dbReference>
<dbReference type="GeneID" id="51118"/>
<dbReference type="KEGG" id="hsa:51118"/>
<dbReference type="MANE-Select" id="ENST00000373014.5">
    <property type="protein sequence ID" value="ENSP00000362105.4"/>
    <property type="RefSeq nucleotide sequence ID" value="NM_016037.4"/>
    <property type="RefSeq protein sequence ID" value="NP_057121.2"/>
</dbReference>
<dbReference type="UCSC" id="uc001ccn.5">
    <molecule id="Q9Y3A2-1"/>
    <property type="organism name" value="human"/>
</dbReference>
<dbReference type="AGR" id="HGNC:24329"/>
<dbReference type="CTD" id="51118"/>
<dbReference type="DisGeNET" id="51118"/>
<dbReference type="GeneCards" id="UTP11"/>
<dbReference type="HGNC" id="HGNC:24329">
    <property type="gene designation" value="UTP11"/>
</dbReference>
<dbReference type="HPA" id="ENSG00000183520">
    <property type="expression patterns" value="Group enriched (skeletal muscle, tongue)"/>
</dbReference>
<dbReference type="MIM" id="609440">
    <property type="type" value="gene"/>
</dbReference>
<dbReference type="neXtProt" id="NX_Q9Y3A2"/>
<dbReference type="OpenTargets" id="ENSG00000183520"/>
<dbReference type="PharmGKB" id="PA142670630"/>
<dbReference type="VEuPathDB" id="HostDB:ENSG00000183520"/>
<dbReference type="eggNOG" id="KOG3237">
    <property type="taxonomic scope" value="Eukaryota"/>
</dbReference>
<dbReference type="GeneTree" id="ENSGT00390000005813"/>
<dbReference type="HOGENOM" id="CLU_061887_2_1_1"/>
<dbReference type="InParanoid" id="Q9Y3A2"/>
<dbReference type="OMA" id="DLKYVVM"/>
<dbReference type="OrthoDB" id="29058at2759"/>
<dbReference type="PAN-GO" id="Q9Y3A2">
    <property type="GO annotations" value="2 GO annotations based on evolutionary models"/>
</dbReference>
<dbReference type="PhylomeDB" id="Q9Y3A2"/>
<dbReference type="TreeFam" id="TF314171"/>
<dbReference type="PathwayCommons" id="Q9Y3A2"/>
<dbReference type="Reactome" id="R-HSA-6790901">
    <property type="pathway name" value="rRNA modification in the nucleus and cytosol"/>
</dbReference>
<dbReference type="Reactome" id="R-HSA-6791226">
    <property type="pathway name" value="Major pathway of rRNA processing in the nucleolus and cytosol"/>
</dbReference>
<dbReference type="SignaLink" id="Q9Y3A2"/>
<dbReference type="BioGRID-ORCS" id="51118">
    <property type="hits" value="670 hits in 1145 CRISPR screens"/>
</dbReference>
<dbReference type="CD-CODE" id="232F8A39">
    <property type="entry name" value="P-body"/>
</dbReference>
<dbReference type="CD-CODE" id="91857CE7">
    <property type="entry name" value="Nucleolus"/>
</dbReference>
<dbReference type="ChiTaRS" id="UTP11">
    <property type="organism name" value="human"/>
</dbReference>
<dbReference type="GeneWiki" id="UTP11L"/>
<dbReference type="GenomeRNAi" id="51118"/>
<dbReference type="Pharos" id="Q9Y3A2">
    <property type="development level" value="Tbio"/>
</dbReference>
<dbReference type="PRO" id="PR:Q9Y3A2"/>
<dbReference type="Proteomes" id="UP000005640">
    <property type="component" value="Chromosome 1"/>
</dbReference>
<dbReference type="RNAct" id="Q9Y3A2">
    <property type="molecule type" value="protein"/>
</dbReference>
<dbReference type="Bgee" id="ENSG00000183520">
    <property type="expression patterns" value="Expressed in biceps brachii and 199 other cell types or tissues"/>
</dbReference>
<dbReference type="GO" id="GO:0005737">
    <property type="term" value="C:cytoplasm"/>
    <property type="evidence" value="ECO:0000314"/>
    <property type="project" value="BHF-UCL"/>
</dbReference>
<dbReference type="GO" id="GO:0005829">
    <property type="term" value="C:cytosol"/>
    <property type="evidence" value="ECO:0000314"/>
    <property type="project" value="HPA"/>
</dbReference>
<dbReference type="GO" id="GO:0005615">
    <property type="term" value="C:extracellular space"/>
    <property type="evidence" value="ECO:0000314"/>
    <property type="project" value="BHF-UCL"/>
</dbReference>
<dbReference type="GO" id="GO:0005730">
    <property type="term" value="C:nucleolus"/>
    <property type="evidence" value="ECO:0000314"/>
    <property type="project" value="BHF-UCL"/>
</dbReference>
<dbReference type="GO" id="GO:0005654">
    <property type="term" value="C:nucleoplasm"/>
    <property type="evidence" value="ECO:0000314"/>
    <property type="project" value="HPA"/>
</dbReference>
<dbReference type="GO" id="GO:0032040">
    <property type="term" value="C:small-subunit processome"/>
    <property type="evidence" value="ECO:0000314"/>
    <property type="project" value="UniProtKB"/>
</dbReference>
<dbReference type="GO" id="GO:0003723">
    <property type="term" value="F:RNA binding"/>
    <property type="evidence" value="ECO:0007005"/>
    <property type="project" value="UniProtKB"/>
</dbReference>
<dbReference type="GO" id="GO:0007399">
    <property type="term" value="P:nervous system development"/>
    <property type="evidence" value="ECO:0000315"/>
    <property type="project" value="HGNC-UCL"/>
</dbReference>
<dbReference type="GO" id="GO:0043065">
    <property type="term" value="P:positive regulation of apoptotic process"/>
    <property type="evidence" value="ECO:0000315"/>
    <property type="project" value="BHF-UCL"/>
</dbReference>
<dbReference type="GO" id="GO:0042274">
    <property type="term" value="P:ribosomal small subunit biogenesis"/>
    <property type="evidence" value="ECO:0000314"/>
    <property type="project" value="UniProtKB"/>
</dbReference>
<dbReference type="GO" id="GO:0006364">
    <property type="term" value="P:rRNA processing"/>
    <property type="evidence" value="ECO:0007669"/>
    <property type="project" value="UniProtKB-KW"/>
</dbReference>
<dbReference type="InterPro" id="IPR007144">
    <property type="entry name" value="SSU_processome_Utp11"/>
</dbReference>
<dbReference type="PANTHER" id="PTHR12838">
    <property type="entry name" value="U3 SMALL NUCLEOLAR RNA-ASSOCIATED PROTEIN 11"/>
    <property type="match status" value="1"/>
</dbReference>
<dbReference type="PANTHER" id="PTHR12838:SF0">
    <property type="entry name" value="U3 SMALL NUCLEOLAR RNA-ASSOCIATED PROTEIN 11-RELATED"/>
    <property type="match status" value="1"/>
</dbReference>
<dbReference type="Pfam" id="PF03998">
    <property type="entry name" value="Utp11"/>
    <property type="match status" value="1"/>
</dbReference>
<dbReference type="PIRSF" id="PIRSF015952">
    <property type="entry name" value="U3snoRNP11"/>
    <property type="match status" value="1"/>
</dbReference>